<name>Y592_CUPPJ</name>
<proteinExistence type="inferred from homology"/>
<feature type="chain" id="PRO_0000291141" description="UPF0434 protein Reut_A0592">
    <location>
        <begin position="1"/>
        <end position="67"/>
    </location>
</feature>
<organism>
    <name type="scientific">Cupriavidus pinatubonensis (strain JMP 134 / LMG 1197)</name>
    <name type="common">Cupriavidus necator (strain JMP 134)</name>
    <dbReference type="NCBI Taxonomy" id="264198"/>
    <lineage>
        <taxon>Bacteria</taxon>
        <taxon>Pseudomonadati</taxon>
        <taxon>Pseudomonadota</taxon>
        <taxon>Betaproteobacteria</taxon>
        <taxon>Burkholderiales</taxon>
        <taxon>Burkholderiaceae</taxon>
        <taxon>Cupriavidus</taxon>
    </lineage>
</organism>
<dbReference type="EMBL" id="CP000090">
    <property type="protein sequence ID" value="AAZ59974.1"/>
    <property type="molecule type" value="Genomic_DNA"/>
</dbReference>
<dbReference type="SMR" id="Q475F9"/>
<dbReference type="STRING" id="264198.Reut_A0592"/>
<dbReference type="KEGG" id="reu:Reut_A0592"/>
<dbReference type="eggNOG" id="COG2835">
    <property type="taxonomic scope" value="Bacteria"/>
</dbReference>
<dbReference type="HOGENOM" id="CLU_155659_3_0_4"/>
<dbReference type="OrthoDB" id="9812205at2"/>
<dbReference type="GO" id="GO:0005829">
    <property type="term" value="C:cytosol"/>
    <property type="evidence" value="ECO:0007669"/>
    <property type="project" value="TreeGrafter"/>
</dbReference>
<dbReference type="FunFam" id="2.20.25.10:FF:000002">
    <property type="entry name" value="UPF0434 protein YcaR"/>
    <property type="match status" value="1"/>
</dbReference>
<dbReference type="Gene3D" id="2.20.25.10">
    <property type="match status" value="1"/>
</dbReference>
<dbReference type="HAMAP" id="MF_01187">
    <property type="entry name" value="UPF0434"/>
    <property type="match status" value="1"/>
</dbReference>
<dbReference type="InterPro" id="IPR005651">
    <property type="entry name" value="Trm112-like"/>
</dbReference>
<dbReference type="PANTHER" id="PTHR33505:SF4">
    <property type="entry name" value="PROTEIN PREY, MITOCHONDRIAL"/>
    <property type="match status" value="1"/>
</dbReference>
<dbReference type="PANTHER" id="PTHR33505">
    <property type="entry name" value="ZGC:162634"/>
    <property type="match status" value="1"/>
</dbReference>
<dbReference type="Pfam" id="PF03966">
    <property type="entry name" value="Trm112p"/>
    <property type="match status" value="1"/>
</dbReference>
<dbReference type="SUPFAM" id="SSF158997">
    <property type="entry name" value="Trm112p-like"/>
    <property type="match status" value="1"/>
</dbReference>
<sequence>MDNRLLEILVCPLCKGKLEYDRAAQELICHADKLAYPIRDGIPVMLADEARQSVPGRVIDPAAPRTE</sequence>
<accession>Q475F9</accession>
<evidence type="ECO:0000255" key="1">
    <source>
        <dbReference type="HAMAP-Rule" id="MF_01187"/>
    </source>
</evidence>
<protein>
    <recommendedName>
        <fullName evidence="1">UPF0434 protein Reut_A0592</fullName>
    </recommendedName>
</protein>
<reference key="1">
    <citation type="journal article" date="2010" name="PLoS ONE">
        <title>The complete multipartite genome sequence of Cupriavidus necator JMP134, a versatile pollutant degrader.</title>
        <authorList>
            <person name="Lykidis A."/>
            <person name="Perez-Pantoja D."/>
            <person name="Ledger T."/>
            <person name="Mavromatis K."/>
            <person name="Anderson I.J."/>
            <person name="Ivanova N.N."/>
            <person name="Hooper S.D."/>
            <person name="Lapidus A."/>
            <person name="Lucas S."/>
            <person name="Gonzalez B."/>
            <person name="Kyrpides N.C."/>
        </authorList>
    </citation>
    <scope>NUCLEOTIDE SEQUENCE [LARGE SCALE GENOMIC DNA]</scope>
    <source>
        <strain>JMP134 / LMG 1197</strain>
    </source>
</reference>
<comment type="similarity">
    <text evidence="1">Belongs to the UPF0434 family.</text>
</comment>
<gene>
    <name type="ordered locus">Reut_A0592</name>
</gene>